<organism>
    <name type="scientific">Bacillus velezensis (strain DSM 23117 / BGSC 10A6 / LMG 26770 / FZB42)</name>
    <name type="common">Bacillus amyloliquefaciens subsp. plantarum</name>
    <dbReference type="NCBI Taxonomy" id="326423"/>
    <lineage>
        <taxon>Bacteria</taxon>
        <taxon>Bacillati</taxon>
        <taxon>Bacillota</taxon>
        <taxon>Bacilli</taxon>
        <taxon>Bacillales</taxon>
        <taxon>Bacillaceae</taxon>
        <taxon>Bacillus</taxon>
        <taxon>Bacillus amyloliquefaciens group</taxon>
    </lineage>
</organism>
<proteinExistence type="inferred from homology"/>
<protein>
    <recommendedName>
        <fullName evidence="1">Small ribosomal subunit protein uS14B</fullName>
    </recommendedName>
    <alternativeName>
        <fullName evidence="2">30S ribosomal protein S14 type Z</fullName>
    </alternativeName>
</protein>
<name>RS14Z_BACVZ</name>
<evidence type="ECO:0000255" key="1">
    <source>
        <dbReference type="HAMAP-Rule" id="MF_01364"/>
    </source>
</evidence>
<evidence type="ECO:0000305" key="2"/>
<accession>A7Z0Q1</accession>
<keyword id="KW-0479">Metal-binding</keyword>
<keyword id="KW-0687">Ribonucleoprotein</keyword>
<keyword id="KW-0689">Ribosomal protein</keyword>
<keyword id="KW-0694">RNA-binding</keyword>
<keyword id="KW-0699">rRNA-binding</keyword>
<keyword id="KW-0862">Zinc</keyword>
<gene>
    <name evidence="1" type="primary">rpsZ</name>
    <name evidence="1" type="synonym">rpsN</name>
    <name type="ordered locus">RBAM_001540</name>
</gene>
<dbReference type="EMBL" id="CP000560">
    <property type="protein sequence ID" value="ABS72577.1"/>
    <property type="molecule type" value="Genomic_DNA"/>
</dbReference>
<dbReference type="RefSeq" id="WP_003156488.1">
    <property type="nucleotide sequence ID" value="NC_009725.2"/>
</dbReference>
<dbReference type="SMR" id="A7Z0Q1"/>
<dbReference type="GeneID" id="93079293"/>
<dbReference type="KEGG" id="bay:RBAM_001540"/>
<dbReference type="HOGENOM" id="CLU_139869_3_0_9"/>
<dbReference type="Proteomes" id="UP000001120">
    <property type="component" value="Chromosome"/>
</dbReference>
<dbReference type="GO" id="GO:0015935">
    <property type="term" value="C:small ribosomal subunit"/>
    <property type="evidence" value="ECO:0007669"/>
    <property type="project" value="TreeGrafter"/>
</dbReference>
<dbReference type="GO" id="GO:0019843">
    <property type="term" value="F:rRNA binding"/>
    <property type="evidence" value="ECO:0007669"/>
    <property type="project" value="UniProtKB-UniRule"/>
</dbReference>
<dbReference type="GO" id="GO:0003735">
    <property type="term" value="F:structural constituent of ribosome"/>
    <property type="evidence" value="ECO:0007669"/>
    <property type="project" value="InterPro"/>
</dbReference>
<dbReference type="GO" id="GO:0008270">
    <property type="term" value="F:zinc ion binding"/>
    <property type="evidence" value="ECO:0007669"/>
    <property type="project" value="UniProtKB-UniRule"/>
</dbReference>
<dbReference type="GO" id="GO:0006412">
    <property type="term" value="P:translation"/>
    <property type="evidence" value="ECO:0007669"/>
    <property type="project" value="UniProtKB-UniRule"/>
</dbReference>
<dbReference type="FunFam" id="4.10.830.10:FF:000001">
    <property type="entry name" value="30S ribosomal protein S14 type Z"/>
    <property type="match status" value="1"/>
</dbReference>
<dbReference type="Gene3D" id="4.10.830.10">
    <property type="entry name" value="30s Ribosomal Protein S14, Chain N"/>
    <property type="match status" value="1"/>
</dbReference>
<dbReference type="HAMAP" id="MF_01364_B">
    <property type="entry name" value="Ribosomal_uS14_2_B"/>
    <property type="match status" value="1"/>
</dbReference>
<dbReference type="InterPro" id="IPR001209">
    <property type="entry name" value="Ribosomal_uS14"/>
</dbReference>
<dbReference type="InterPro" id="IPR023053">
    <property type="entry name" value="Ribosomal_uS14_bact"/>
</dbReference>
<dbReference type="InterPro" id="IPR018271">
    <property type="entry name" value="Ribosomal_uS14_CS"/>
</dbReference>
<dbReference type="InterPro" id="IPR043140">
    <property type="entry name" value="Ribosomal_uS14_sf"/>
</dbReference>
<dbReference type="NCBIfam" id="NF005974">
    <property type="entry name" value="PRK08061.1"/>
    <property type="match status" value="1"/>
</dbReference>
<dbReference type="PANTHER" id="PTHR19836">
    <property type="entry name" value="30S RIBOSOMAL PROTEIN S14"/>
    <property type="match status" value="1"/>
</dbReference>
<dbReference type="PANTHER" id="PTHR19836:SF26">
    <property type="entry name" value="SMALL RIBOSOMAL SUBUNIT PROTEIN US14B"/>
    <property type="match status" value="1"/>
</dbReference>
<dbReference type="Pfam" id="PF00253">
    <property type="entry name" value="Ribosomal_S14"/>
    <property type="match status" value="1"/>
</dbReference>
<dbReference type="SUPFAM" id="SSF57716">
    <property type="entry name" value="Glucocorticoid receptor-like (DNA-binding domain)"/>
    <property type="match status" value="1"/>
</dbReference>
<dbReference type="PROSITE" id="PS00527">
    <property type="entry name" value="RIBOSOMAL_S14"/>
    <property type="match status" value="1"/>
</dbReference>
<feature type="chain" id="PRO_1000067924" description="Small ribosomal subunit protein uS14B">
    <location>
        <begin position="1"/>
        <end position="61"/>
    </location>
</feature>
<feature type="binding site" evidence="1">
    <location>
        <position position="24"/>
    </location>
    <ligand>
        <name>Zn(2+)</name>
        <dbReference type="ChEBI" id="CHEBI:29105"/>
    </ligand>
</feature>
<feature type="binding site" evidence="1">
    <location>
        <position position="27"/>
    </location>
    <ligand>
        <name>Zn(2+)</name>
        <dbReference type="ChEBI" id="CHEBI:29105"/>
    </ligand>
</feature>
<feature type="binding site" evidence="1">
    <location>
        <position position="40"/>
    </location>
    <ligand>
        <name>Zn(2+)</name>
        <dbReference type="ChEBI" id="CHEBI:29105"/>
    </ligand>
</feature>
<feature type="binding site" evidence="1">
    <location>
        <position position="43"/>
    </location>
    <ligand>
        <name>Zn(2+)</name>
        <dbReference type="ChEBI" id="CHEBI:29105"/>
    </ligand>
</feature>
<comment type="function">
    <text evidence="1">Binds 16S rRNA, required for the assembly of 30S particles and may also be responsible for determining the conformation of the 16S rRNA at the A site.</text>
</comment>
<comment type="cofactor">
    <cofactor evidence="1">
        <name>Zn(2+)</name>
        <dbReference type="ChEBI" id="CHEBI:29105"/>
    </cofactor>
    <text evidence="1">Binds 1 zinc ion per subunit.</text>
</comment>
<comment type="subunit">
    <text evidence="1">Part of the 30S ribosomal subunit. Contacts proteins S3 and S10.</text>
</comment>
<comment type="similarity">
    <text evidence="1">Belongs to the universal ribosomal protein uS14 family. Zinc-binding uS14 subfamily.</text>
</comment>
<sequence length="61" mass="7246">MAKKSMIAKQQRTPKFKVQEYTRCERCGRPHSVIRKFKLCRICFRELAYKGQIPGVKKASW</sequence>
<reference key="1">
    <citation type="journal article" date="2007" name="Nat. Biotechnol.">
        <title>Comparative analysis of the complete genome sequence of the plant growth-promoting bacterium Bacillus amyloliquefaciens FZB42.</title>
        <authorList>
            <person name="Chen X.H."/>
            <person name="Koumoutsi A."/>
            <person name="Scholz R."/>
            <person name="Eisenreich A."/>
            <person name="Schneider K."/>
            <person name="Heinemeyer I."/>
            <person name="Morgenstern B."/>
            <person name="Voss B."/>
            <person name="Hess W.R."/>
            <person name="Reva O."/>
            <person name="Junge H."/>
            <person name="Voigt B."/>
            <person name="Jungblut P.R."/>
            <person name="Vater J."/>
            <person name="Suessmuth R."/>
            <person name="Liesegang H."/>
            <person name="Strittmatter A."/>
            <person name="Gottschalk G."/>
            <person name="Borriss R."/>
        </authorList>
    </citation>
    <scope>NUCLEOTIDE SEQUENCE [LARGE SCALE GENOMIC DNA]</scope>
    <source>
        <strain>DSM 23117 / BGSC 10A6 / LMG 26770 / FZB42</strain>
    </source>
</reference>